<protein>
    <recommendedName>
        <fullName evidence="3">CoA-transferase/lyase DddD</fullName>
        <ecNumber evidence="2">2.-.-.-</ecNumber>
    </recommendedName>
</protein>
<dbReference type="EC" id="2.-.-.-" evidence="2"/>
<dbReference type="EMBL" id="CP000749">
    <property type="protein sequence ID" value="ABR72937.1"/>
    <property type="molecule type" value="Genomic_DNA"/>
</dbReference>
<dbReference type="SMR" id="A6W2K8"/>
<dbReference type="STRING" id="400668.Mmwyl1_4041"/>
<dbReference type="KEGG" id="mmw:Mmwyl1_4041"/>
<dbReference type="eggNOG" id="COG1804">
    <property type="taxonomic scope" value="Bacteria"/>
</dbReference>
<dbReference type="HOGENOM" id="CLU_010587_2_0_6"/>
<dbReference type="OrthoDB" id="9058532at2"/>
<dbReference type="BioCyc" id="MetaCyc:MONOMER-14240"/>
<dbReference type="GO" id="GO:0016829">
    <property type="term" value="F:lyase activity"/>
    <property type="evidence" value="ECO:0007669"/>
    <property type="project" value="UniProtKB-KW"/>
</dbReference>
<dbReference type="GO" id="GO:0016740">
    <property type="term" value="F:transferase activity"/>
    <property type="evidence" value="ECO:0007669"/>
    <property type="project" value="UniProtKB-KW"/>
</dbReference>
<dbReference type="Gene3D" id="3.40.50.10540">
    <property type="entry name" value="Crotonobetainyl-coa:carnitine coa-transferase, domain 1"/>
    <property type="match status" value="3"/>
</dbReference>
<dbReference type="Gene3D" id="3.30.1540.10">
    <property type="entry name" value="formyl-coa transferase, domain 3"/>
    <property type="match status" value="2"/>
</dbReference>
<dbReference type="InterPro" id="IPR050509">
    <property type="entry name" value="CoA-transferase_III"/>
</dbReference>
<dbReference type="InterPro" id="IPR003673">
    <property type="entry name" value="CoA-Trfase_fam_III"/>
</dbReference>
<dbReference type="InterPro" id="IPR044855">
    <property type="entry name" value="CoA-Trfase_III_dom3_sf"/>
</dbReference>
<dbReference type="InterPro" id="IPR023606">
    <property type="entry name" value="CoA-Trfase_III_dom_1_sf"/>
</dbReference>
<dbReference type="PANTHER" id="PTHR48228:SF5">
    <property type="entry name" value="ALPHA-METHYLACYL-COA RACEMASE"/>
    <property type="match status" value="1"/>
</dbReference>
<dbReference type="PANTHER" id="PTHR48228">
    <property type="entry name" value="SUCCINYL-COA--D-CITRAMALATE COA-TRANSFERASE"/>
    <property type="match status" value="1"/>
</dbReference>
<dbReference type="Pfam" id="PF02515">
    <property type="entry name" value="CoA_transf_3"/>
    <property type="match status" value="2"/>
</dbReference>
<dbReference type="SUPFAM" id="SSF89796">
    <property type="entry name" value="CoA-transferase family III (CaiB/BaiF)"/>
    <property type="match status" value="2"/>
</dbReference>
<comment type="function">
    <text evidence="1 2">Dimethyl sulfide (DMS)-producing enzyme (PubMed:17272727, PubMed:25140443). Acts both as a transferase and a lyase: uses acetyl-coenzyme A (acetyl-coA) and dimethylsulfoniopropionate (DMSP) as substrates to produce DMS, acetate and 3-hydroxypropionate-CoA (3HP-CoA). Mediates the CoA-transferase prior to lyase activity (PubMed:25140443). DMS is the principal form by which sulfur is transported from oceans to the atmosphere and is a key component of the ocean sulfur cycle (PubMed:17272727, PubMed:25140443).</text>
</comment>
<comment type="biophysicochemical properties">
    <kinetics>
        <KM evidence="2">67 uM for acetyl-CoA</KM>
        <text evidence="2">kcat is 10.8 sec(-1).</text>
    </kinetics>
</comment>
<comment type="disruption phenotype">
    <text evidence="1">Cells are unable to grow on dimethylsulfoniopropionate (DMSP) as sole carbon source.</text>
</comment>
<comment type="miscellaneous">
    <text evidence="4">At least 10 million metric tons of volatile dimethyl sulfide (DMS) are released into the atmosphere annually by the dimethylsulfoniopropionate lyase in oceans. It is a component of the tangy aroma of the seaside and functions as a chemical attractant that guides various marine animals, such as sea birds, invertebrates, and some mammals, toward potential food supplies. DMS oxidation products act as condensation nuclei, causing water molecules to coalesce, with possible effects on local climate through enhanced cloud formation.</text>
</comment>
<comment type="similarity">
    <text evidence="3">Belongs to the CoA-transferase III family.</text>
</comment>
<evidence type="ECO:0000269" key="1">
    <source>
    </source>
</evidence>
<evidence type="ECO:0000269" key="2">
    <source>
    </source>
</evidence>
<evidence type="ECO:0000305" key="3"/>
<evidence type="ECO:0000305" key="4">
    <source>
    </source>
</evidence>
<evidence type="ECO:0000312" key="5">
    <source>
        <dbReference type="EMBL" id="ABR72937.1"/>
    </source>
</evidence>
<proteinExistence type="evidence at protein level"/>
<name>DDDD_MARMS</name>
<sequence>MNKQNQLPLVGVRVADFGQQIAGPAVAMVLADLGATVVHIDPPGGPSWKHPANAILNRNKASLCIDLKTQAGLDQALELIENVDIVIESFRPGVMKRLGIDFVALRESRPELITLSMPGFASNDELHRDWKATEAIVAATSGTFTDMGFNRVLMGLNPSFSPLPLGSSYAISLAASSIALALFEREKTGRGDNIEVPIAAALMEGLSYNSYVVDQLPERYKTMRELEIEHRKSNNIKMDVSYAQLQEYLDPFYRTYVCADGRQFYCVCPSHRNHAERALKVLGIYDELVAEGLPEVKDLHVPISEWDGETSIGVYPLPKKWADLISEKMKKAFLQKTSDEWGVIFGEGQIPGAPHRSTEEWVNSEHCNASGLIVEVEGTEFGTMKQPGPIVWFENESEAMLKPKPQEHVSFEQALARLQSVAKIEKISRPTGQDIQPASGKGWLDGVKILDLTNVIAGPHSTAFMSRFGAEITKLDPVTPLYDPLIGILFTFQTGVGKQSALVNIMTKEGREVFERLVRSVDIVVINAPDRQMKPLGLDQDSLSAINPDVLFCRLDCFGGPRTGSKTNYIGYDDIIQANSGIMSRFGKPETPEEHAHLGTLDVNCGFAAALGMVIALYQKRKTGKVCRVRTSLSAVTNIAQIPFAFDYEGRAPFNEASGREAMGNHALSHFYRTNSGWVFLDSHQGELAKLDAIKGLNGIQQSQDMGQFLRDQLVKESSAYWLKEFAAADIACAEPFSIEYLREHNSRVADQKVGTDLGSYAFSIFPDHPSGHCITQVDPYSIRPREAKIRAVTPTEKFGCSTIKVLQGLGYSESDINDMLEKKIAATGWGREFLPS</sequence>
<feature type="chain" id="PRO_0000433895" description="CoA-transferase/lyase DddD">
    <location>
        <begin position="1"/>
        <end position="837"/>
    </location>
</feature>
<feature type="active site" description="Nucleophile" evidence="4">
    <location>
        <position position="602"/>
    </location>
</feature>
<feature type="mutagenesis site" description="Abolishes ability to produce dimethyl sulfide (DMS)." evidence="2">
    <original>D</original>
    <variation>A</variation>
    <location>
        <position position="602"/>
    </location>
</feature>
<reference key="1">
    <citation type="submission" date="2007-06" db="EMBL/GenBank/DDBJ databases">
        <title>Complete sequence of Marinomonas sp. MWYL1.</title>
        <authorList>
            <consortium name="US DOE Joint Genome Institute"/>
            <person name="Copeland A."/>
            <person name="Lucas S."/>
            <person name="Lapidus A."/>
            <person name="Barry K."/>
            <person name="Glavina del Rio T."/>
            <person name="Dalin E."/>
            <person name="Tice H."/>
            <person name="Pitluck S."/>
            <person name="Kiss H."/>
            <person name="Brettin T."/>
            <person name="Bruce D."/>
            <person name="Detter J.C."/>
            <person name="Han C."/>
            <person name="Schmutz J."/>
            <person name="Larimer F."/>
            <person name="Land M."/>
            <person name="Hauser L."/>
            <person name="Kyrpides N."/>
            <person name="Kim E."/>
            <person name="Johnston A.W.B."/>
            <person name="Todd J.D."/>
            <person name="Rogers R."/>
            <person name="Wexler M."/>
            <person name="Bond P.L."/>
            <person name="Li Y."/>
            <person name="Richardson P."/>
        </authorList>
    </citation>
    <scope>NUCLEOTIDE SEQUENCE [LARGE SCALE GENOMIC DNA]</scope>
    <source>
        <strain>MWYL1</strain>
    </source>
</reference>
<reference key="2">
    <citation type="journal article" date="2007" name="Science">
        <title>Structural and regulatory genes required to make the gas dimethyl sulfide in bacteria.</title>
        <authorList>
            <person name="Todd J.D."/>
            <person name="Rogers R."/>
            <person name="Li Y.G."/>
            <person name="Wexler M."/>
            <person name="Bond P.L."/>
            <person name="Sun L."/>
            <person name="Curson A.R."/>
            <person name="Malin G."/>
            <person name="Steinke M."/>
            <person name="Johnston A.W."/>
        </authorList>
    </citation>
    <scope>FUNCTION</scope>
    <scope>DISRUPTION PHENOTYPE</scope>
</reference>
<reference key="3">
    <citation type="journal article" date="2014" name="Biochemistry">
        <title>DddD is a CoA-transferase/lyase producing dimethyl sulfide in the marine environment.</title>
        <authorList>
            <person name="Alcolombri U."/>
            <person name="Laurino P."/>
            <person name="Lara-Astiaso P."/>
            <person name="Vardi A."/>
            <person name="Tawfik D.S."/>
        </authorList>
    </citation>
    <scope>FUNCTION</scope>
    <scope>BIOPHYSICOCHEMICAL PROPERTIES</scope>
    <scope>MUTAGENESIS OF ASP-602</scope>
</reference>
<accession>A6W2K8</accession>
<organism>
    <name type="scientific">Marinomonas sp. (strain MWYL1)</name>
    <dbReference type="NCBI Taxonomy" id="400668"/>
    <lineage>
        <taxon>Bacteria</taxon>
        <taxon>Pseudomonadati</taxon>
        <taxon>Pseudomonadota</taxon>
        <taxon>Gammaproteobacteria</taxon>
        <taxon>Oceanospirillales</taxon>
        <taxon>Oceanospirillaceae</taxon>
        <taxon>Marinomonas</taxon>
    </lineage>
</organism>
<keyword id="KW-0456">Lyase</keyword>
<keyword id="KW-0808">Transferase</keyword>
<gene>
    <name evidence="5" type="primary">dddD</name>
    <name evidence="5" type="ordered locus">Mmwyl1_4041</name>
</gene>